<proteinExistence type="inferred from homology"/>
<comment type="function">
    <text evidence="1">This protein is located at the 30S-50S ribosomal subunit interface and may play a role in the structure and function of the aminoacyl-tRNA binding site.</text>
</comment>
<comment type="similarity">
    <text evidence="1">Belongs to the bacterial ribosomal protein bL19 family.</text>
</comment>
<protein>
    <recommendedName>
        <fullName evidence="1">Large ribosomal subunit protein bL19</fullName>
    </recommendedName>
    <alternativeName>
        <fullName evidence="2">50S ribosomal protein L19</fullName>
    </alternativeName>
</protein>
<sequence>MNLIKQLEQEQFDKLSAGKDIPEFGPGDTVIVNVKVVEGDRTRVQAYEGVCIGRSGGGLNESFTVRKISYGEGVERVFPVMSPMIDSIKVVRRGKVRRAKLYYLRNLRGKSARIVEKQDRQAAVGE</sequence>
<accession>Q89X35</accession>
<dbReference type="EMBL" id="BA000040">
    <property type="protein sequence ID" value="BAC45752.1"/>
    <property type="molecule type" value="Genomic_DNA"/>
</dbReference>
<dbReference type="RefSeq" id="NP_767127.1">
    <property type="nucleotide sequence ID" value="NC_004463.1"/>
</dbReference>
<dbReference type="RefSeq" id="WP_011083318.1">
    <property type="nucleotide sequence ID" value="NZ_CP011360.1"/>
</dbReference>
<dbReference type="SMR" id="Q89X35"/>
<dbReference type="FunCoup" id="Q89X35">
    <property type="interactions" value="878"/>
</dbReference>
<dbReference type="STRING" id="224911.AAV28_41690"/>
<dbReference type="EnsemblBacteria" id="BAC45752">
    <property type="protein sequence ID" value="BAC45752"/>
    <property type="gene ID" value="BAC45752"/>
</dbReference>
<dbReference type="GeneID" id="46495632"/>
<dbReference type="KEGG" id="bja:blr0487"/>
<dbReference type="PATRIC" id="fig|224911.44.peg.9021"/>
<dbReference type="eggNOG" id="COG0335">
    <property type="taxonomic scope" value="Bacteria"/>
</dbReference>
<dbReference type="HOGENOM" id="CLU_103507_2_1_5"/>
<dbReference type="InParanoid" id="Q89X35"/>
<dbReference type="OrthoDB" id="9803541at2"/>
<dbReference type="PhylomeDB" id="Q89X35"/>
<dbReference type="Proteomes" id="UP000002526">
    <property type="component" value="Chromosome"/>
</dbReference>
<dbReference type="GO" id="GO:0022625">
    <property type="term" value="C:cytosolic large ribosomal subunit"/>
    <property type="evidence" value="ECO:0000318"/>
    <property type="project" value="GO_Central"/>
</dbReference>
<dbReference type="GO" id="GO:0003735">
    <property type="term" value="F:structural constituent of ribosome"/>
    <property type="evidence" value="ECO:0000318"/>
    <property type="project" value="GO_Central"/>
</dbReference>
<dbReference type="GO" id="GO:0006412">
    <property type="term" value="P:translation"/>
    <property type="evidence" value="ECO:0007669"/>
    <property type="project" value="UniProtKB-UniRule"/>
</dbReference>
<dbReference type="FunFam" id="2.30.30.790:FF:000001">
    <property type="entry name" value="50S ribosomal protein L19"/>
    <property type="match status" value="1"/>
</dbReference>
<dbReference type="Gene3D" id="2.30.30.790">
    <property type="match status" value="1"/>
</dbReference>
<dbReference type="HAMAP" id="MF_00402">
    <property type="entry name" value="Ribosomal_bL19"/>
    <property type="match status" value="1"/>
</dbReference>
<dbReference type="InterPro" id="IPR001857">
    <property type="entry name" value="Ribosomal_bL19"/>
</dbReference>
<dbReference type="InterPro" id="IPR018257">
    <property type="entry name" value="Ribosomal_bL19_CS"/>
</dbReference>
<dbReference type="InterPro" id="IPR038657">
    <property type="entry name" value="Ribosomal_bL19_sf"/>
</dbReference>
<dbReference type="InterPro" id="IPR008991">
    <property type="entry name" value="Translation_prot_SH3-like_sf"/>
</dbReference>
<dbReference type="NCBIfam" id="TIGR01024">
    <property type="entry name" value="rplS_bact"/>
    <property type="match status" value="1"/>
</dbReference>
<dbReference type="PANTHER" id="PTHR15680:SF9">
    <property type="entry name" value="LARGE RIBOSOMAL SUBUNIT PROTEIN BL19M"/>
    <property type="match status" value="1"/>
</dbReference>
<dbReference type="PANTHER" id="PTHR15680">
    <property type="entry name" value="RIBOSOMAL PROTEIN L19"/>
    <property type="match status" value="1"/>
</dbReference>
<dbReference type="Pfam" id="PF01245">
    <property type="entry name" value="Ribosomal_L19"/>
    <property type="match status" value="1"/>
</dbReference>
<dbReference type="PIRSF" id="PIRSF002191">
    <property type="entry name" value="Ribosomal_L19"/>
    <property type="match status" value="1"/>
</dbReference>
<dbReference type="PRINTS" id="PR00061">
    <property type="entry name" value="RIBOSOMALL19"/>
</dbReference>
<dbReference type="SUPFAM" id="SSF50104">
    <property type="entry name" value="Translation proteins SH3-like domain"/>
    <property type="match status" value="1"/>
</dbReference>
<dbReference type="PROSITE" id="PS01015">
    <property type="entry name" value="RIBOSOMAL_L19"/>
    <property type="match status" value="1"/>
</dbReference>
<keyword id="KW-1185">Reference proteome</keyword>
<keyword id="KW-0687">Ribonucleoprotein</keyword>
<keyword id="KW-0689">Ribosomal protein</keyword>
<evidence type="ECO:0000255" key="1">
    <source>
        <dbReference type="HAMAP-Rule" id="MF_00402"/>
    </source>
</evidence>
<evidence type="ECO:0000305" key="2"/>
<feature type="chain" id="PRO_0000163423" description="Large ribosomal subunit protein bL19">
    <location>
        <begin position="1"/>
        <end position="126"/>
    </location>
</feature>
<name>RL19_BRADU</name>
<reference key="1">
    <citation type="journal article" date="2002" name="DNA Res.">
        <title>Complete genomic sequence of nitrogen-fixing symbiotic bacterium Bradyrhizobium japonicum USDA110.</title>
        <authorList>
            <person name="Kaneko T."/>
            <person name="Nakamura Y."/>
            <person name="Sato S."/>
            <person name="Minamisawa K."/>
            <person name="Uchiumi T."/>
            <person name="Sasamoto S."/>
            <person name="Watanabe A."/>
            <person name="Idesawa K."/>
            <person name="Iriguchi M."/>
            <person name="Kawashima K."/>
            <person name="Kohara M."/>
            <person name="Matsumoto M."/>
            <person name="Shimpo S."/>
            <person name="Tsuruoka H."/>
            <person name="Wada T."/>
            <person name="Yamada M."/>
            <person name="Tabata S."/>
        </authorList>
    </citation>
    <scope>NUCLEOTIDE SEQUENCE [LARGE SCALE GENOMIC DNA]</scope>
    <source>
        <strain>JCM 10833 / BCRC 13528 / IAM 13628 / NBRC 14792 / USDA 110</strain>
    </source>
</reference>
<gene>
    <name evidence="1" type="primary">rplS</name>
    <name type="ordered locus">blr0487</name>
</gene>
<organism>
    <name type="scientific">Bradyrhizobium diazoefficiens (strain JCM 10833 / BCRC 13528 / IAM 13628 / NBRC 14792 / USDA 110)</name>
    <dbReference type="NCBI Taxonomy" id="224911"/>
    <lineage>
        <taxon>Bacteria</taxon>
        <taxon>Pseudomonadati</taxon>
        <taxon>Pseudomonadota</taxon>
        <taxon>Alphaproteobacteria</taxon>
        <taxon>Hyphomicrobiales</taxon>
        <taxon>Nitrobacteraceae</taxon>
        <taxon>Bradyrhizobium</taxon>
    </lineage>
</organism>